<comment type="function">
    <text evidence="1">Catalyzes the reversible formation of acyl-phosphate (acyl-PO(4)) from acyl-[acyl-carrier-protein] (acyl-ACP). This enzyme utilizes acyl-ACP as fatty acyl donor, but not acyl-CoA.</text>
</comment>
<comment type="catalytic activity">
    <reaction evidence="1">
        <text>a fatty acyl-[ACP] + phosphate = an acyl phosphate + holo-[ACP]</text>
        <dbReference type="Rhea" id="RHEA:42292"/>
        <dbReference type="Rhea" id="RHEA-COMP:9685"/>
        <dbReference type="Rhea" id="RHEA-COMP:14125"/>
        <dbReference type="ChEBI" id="CHEBI:43474"/>
        <dbReference type="ChEBI" id="CHEBI:59918"/>
        <dbReference type="ChEBI" id="CHEBI:64479"/>
        <dbReference type="ChEBI" id="CHEBI:138651"/>
        <dbReference type="EC" id="2.3.1.274"/>
    </reaction>
</comment>
<comment type="pathway">
    <text evidence="1">Lipid metabolism; phospholipid metabolism.</text>
</comment>
<comment type="subunit">
    <text evidence="1">Homodimer. Probably interacts with PlsY.</text>
</comment>
<comment type="subcellular location">
    <subcellularLocation>
        <location evidence="1">Cytoplasm</location>
    </subcellularLocation>
    <text evidence="1">Associated with the membrane possibly through PlsY.</text>
</comment>
<comment type="similarity">
    <text evidence="1">Belongs to the PlsX family.</text>
</comment>
<accession>Q9Z6U6</accession>
<accession>Q9JQ90</accession>
<gene>
    <name evidence="1" type="primary">plsX</name>
    <name type="ordered locus">CPn_0962</name>
    <name type="ordered locus">CP_0898</name>
    <name type="ordered locus">CpB0999</name>
</gene>
<reference key="1">
    <citation type="journal article" date="1999" name="Nat. Genet.">
        <title>Comparative genomes of Chlamydia pneumoniae and C. trachomatis.</title>
        <authorList>
            <person name="Kalman S."/>
            <person name="Mitchell W.P."/>
            <person name="Marathe R."/>
            <person name="Lammel C.J."/>
            <person name="Fan J."/>
            <person name="Hyman R.W."/>
            <person name="Olinger L."/>
            <person name="Grimwood J."/>
            <person name="Davis R.W."/>
            <person name="Stephens R.S."/>
        </authorList>
    </citation>
    <scope>NUCLEOTIDE SEQUENCE [LARGE SCALE GENOMIC DNA]</scope>
    <source>
        <strain>CWL029</strain>
    </source>
</reference>
<reference key="2">
    <citation type="journal article" date="2000" name="Nucleic Acids Res.">
        <title>Genome sequences of Chlamydia trachomatis MoPn and Chlamydia pneumoniae AR39.</title>
        <authorList>
            <person name="Read T.D."/>
            <person name="Brunham R.C."/>
            <person name="Shen C."/>
            <person name="Gill S.R."/>
            <person name="Heidelberg J.F."/>
            <person name="White O."/>
            <person name="Hickey E.K."/>
            <person name="Peterson J.D."/>
            <person name="Utterback T.R."/>
            <person name="Berry K.J."/>
            <person name="Bass S."/>
            <person name="Linher K.D."/>
            <person name="Weidman J.F."/>
            <person name="Khouri H.M."/>
            <person name="Craven B."/>
            <person name="Bowman C."/>
            <person name="Dodson R.J."/>
            <person name="Gwinn M.L."/>
            <person name="Nelson W.C."/>
            <person name="DeBoy R.T."/>
            <person name="Kolonay J.F."/>
            <person name="McClarty G."/>
            <person name="Salzberg S.L."/>
            <person name="Eisen J.A."/>
            <person name="Fraser C.M."/>
        </authorList>
    </citation>
    <scope>NUCLEOTIDE SEQUENCE [LARGE SCALE GENOMIC DNA]</scope>
    <source>
        <strain>AR39</strain>
    </source>
</reference>
<reference key="3">
    <citation type="journal article" date="2000" name="Nucleic Acids Res.">
        <title>Comparison of whole genome sequences of Chlamydia pneumoniae J138 from Japan and CWL029 from USA.</title>
        <authorList>
            <person name="Shirai M."/>
            <person name="Hirakawa H."/>
            <person name="Kimoto M."/>
            <person name="Tabuchi M."/>
            <person name="Kishi F."/>
            <person name="Ouchi K."/>
            <person name="Shiba T."/>
            <person name="Ishii K."/>
            <person name="Hattori M."/>
            <person name="Kuhara S."/>
            <person name="Nakazawa T."/>
        </authorList>
    </citation>
    <scope>NUCLEOTIDE SEQUENCE [LARGE SCALE GENOMIC DNA]</scope>
    <source>
        <strain>J138</strain>
    </source>
</reference>
<reference key="4">
    <citation type="submission" date="2002-05" db="EMBL/GenBank/DDBJ databases">
        <title>The genome sequence of Chlamydia pneumoniae TW183 and comparison with other Chlamydia strains based on whole genome sequence analysis.</title>
        <authorList>
            <person name="Geng M.M."/>
            <person name="Schuhmacher A."/>
            <person name="Muehldorfer I."/>
            <person name="Bensch K.W."/>
            <person name="Schaefer K.P."/>
            <person name="Schneider S."/>
            <person name="Pohl T."/>
            <person name="Essig A."/>
            <person name="Marre R."/>
            <person name="Melchers K."/>
        </authorList>
    </citation>
    <scope>NUCLEOTIDE SEQUENCE [LARGE SCALE GENOMIC DNA]</scope>
    <source>
        <strain>TW-183</strain>
    </source>
</reference>
<keyword id="KW-0963">Cytoplasm</keyword>
<keyword id="KW-0444">Lipid biosynthesis</keyword>
<keyword id="KW-0443">Lipid metabolism</keyword>
<keyword id="KW-0594">Phospholipid biosynthesis</keyword>
<keyword id="KW-1208">Phospholipid metabolism</keyword>
<keyword id="KW-0808">Transferase</keyword>
<dbReference type="EC" id="2.3.1.274" evidence="1"/>
<dbReference type="EMBL" id="AE001363">
    <property type="protein sequence ID" value="AAD19098.1"/>
    <property type="molecule type" value="Genomic_DNA"/>
</dbReference>
<dbReference type="EMBL" id="AE002161">
    <property type="protein sequence ID" value="AAF73715.1"/>
    <property type="molecule type" value="Genomic_DNA"/>
</dbReference>
<dbReference type="EMBL" id="BA000008">
    <property type="protein sequence ID" value="BAA99170.1"/>
    <property type="molecule type" value="Genomic_DNA"/>
</dbReference>
<dbReference type="EMBL" id="AE009440">
    <property type="protein sequence ID" value="AAP98928.1"/>
    <property type="molecule type" value="Genomic_DNA"/>
</dbReference>
<dbReference type="PIR" id="G72013">
    <property type="entry name" value="G72013"/>
</dbReference>
<dbReference type="PIR" id="H86610">
    <property type="entry name" value="H86610"/>
</dbReference>
<dbReference type="RefSeq" id="NP_225155.1">
    <property type="nucleotide sequence ID" value="NC_000922.1"/>
</dbReference>
<dbReference type="RefSeq" id="WP_010883595.1">
    <property type="nucleotide sequence ID" value="NZ_LN847257.1"/>
</dbReference>
<dbReference type="SMR" id="Q9Z6U6"/>
<dbReference type="STRING" id="406984.CPK_ORF00377"/>
<dbReference type="GeneID" id="45051019"/>
<dbReference type="KEGG" id="cpa:CP_0898"/>
<dbReference type="KEGG" id="cpj:plsX"/>
<dbReference type="KEGG" id="cpn:CPn_0962"/>
<dbReference type="KEGG" id="cpt:CpB0999"/>
<dbReference type="PATRIC" id="fig|115713.3.peg.1053"/>
<dbReference type="eggNOG" id="COG0416">
    <property type="taxonomic scope" value="Bacteria"/>
</dbReference>
<dbReference type="HOGENOM" id="CLU_039379_1_0_0"/>
<dbReference type="OrthoDB" id="9806408at2"/>
<dbReference type="UniPathway" id="UPA00085"/>
<dbReference type="Proteomes" id="UP000000583">
    <property type="component" value="Chromosome"/>
</dbReference>
<dbReference type="Proteomes" id="UP000000801">
    <property type="component" value="Chromosome"/>
</dbReference>
<dbReference type="GO" id="GO:0005737">
    <property type="term" value="C:cytoplasm"/>
    <property type="evidence" value="ECO:0007669"/>
    <property type="project" value="UniProtKB-SubCell"/>
</dbReference>
<dbReference type="GO" id="GO:0043811">
    <property type="term" value="F:phosphate:acyl-[acyl carrier protein] acyltransferase activity"/>
    <property type="evidence" value="ECO:0007669"/>
    <property type="project" value="UniProtKB-UniRule"/>
</dbReference>
<dbReference type="GO" id="GO:0006633">
    <property type="term" value="P:fatty acid biosynthetic process"/>
    <property type="evidence" value="ECO:0007669"/>
    <property type="project" value="UniProtKB-UniRule"/>
</dbReference>
<dbReference type="GO" id="GO:0008654">
    <property type="term" value="P:phospholipid biosynthetic process"/>
    <property type="evidence" value="ECO:0007669"/>
    <property type="project" value="UniProtKB-KW"/>
</dbReference>
<dbReference type="Gene3D" id="3.40.718.10">
    <property type="entry name" value="Isopropylmalate Dehydrogenase"/>
    <property type="match status" value="1"/>
</dbReference>
<dbReference type="HAMAP" id="MF_00019">
    <property type="entry name" value="PlsX"/>
    <property type="match status" value="1"/>
</dbReference>
<dbReference type="InterPro" id="IPR003664">
    <property type="entry name" value="FA_synthesis"/>
</dbReference>
<dbReference type="InterPro" id="IPR012281">
    <property type="entry name" value="Phospholipid_synth_PlsX-like"/>
</dbReference>
<dbReference type="NCBIfam" id="NF010420">
    <property type="entry name" value="PRK13846.1"/>
    <property type="match status" value="1"/>
</dbReference>
<dbReference type="PANTHER" id="PTHR30100">
    <property type="entry name" value="FATTY ACID/PHOSPHOLIPID SYNTHESIS PROTEIN PLSX"/>
    <property type="match status" value="1"/>
</dbReference>
<dbReference type="PANTHER" id="PTHR30100:SF1">
    <property type="entry name" value="PHOSPHATE ACYLTRANSFERASE"/>
    <property type="match status" value="1"/>
</dbReference>
<dbReference type="Pfam" id="PF02504">
    <property type="entry name" value="FA_synthesis"/>
    <property type="match status" value="1"/>
</dbReference>
<dbReference type="PIRSF" id="PIRSF002465">
    <property type="entry name" value="Phsphlp_syn_PlsX"/>
    <property type="match status" value="1"/>
</dbReference>
<dbReference type="SUPFAM" id="SSF53659">
    <property type="entry name" value="Isocitrate/Isopropylmalate dehydrogenase-like"/>
    <property type="match status" value="1"/>
</dbReference>
<sequence>MEVQIGIDLMGGDHSPLVVWQVLVDVLKSQSSTIPFAFTLFASEEIRKQIQEEFISDLPQEKFPKIISAENFVAMEDSPLAAIRKKSSSMALGLDYLQEDKLDAFISTGNTGALVTLARAKIPLFPAVSRPALLVCVPTMRGHAVILDVGANISVKPEEMVGFARMGLAYRQCLGDSKIPTIGLLNIGSEERKGTEAHRQTFRMLRETFGEAFLGNIESGAVFDGAADIVVTDGFTGNIFLKTAEGVFEFLQRILGDKLEADIQRRLDYTFYPGSVVCGLSKLVIKCHGKACGSSLFHGILGSINLAQARLCKRILSNLI</sequence>
<evidence type="ECO:0000255" key="1">
    <source>
        <dbReference type="HAMAP-Rule" id="MF_00019"/>
    </source>
</evidence>
<proteinExistence type="inferred from homology"/>
<name>PLSX_CHLPN</name>
<protein>
    <recommendedName>
        <fullName evidence="1">Phosphate acyltransferase</fullName>
        <ecNumber evidence="1">2.3.1.274</ecNumber>
    </recommendedName>
    <alternativeName>
        <fullName evidence="1">Acyl-ACP phosphotransacylase</fullName>
    </alternativeName>
    <alternativeName>
        <fullName evidence="1">Acyl-[acyl-carrier-protein]--phosphate acyltransferase</fullName>
    </alternativeName>
    <alternativeName>
        <fullName evidence="1">Phosphate-acyl-ACP acyltransferase</fullName>
    </alternativeName>
</protein>
<organism>
    <name type="scientific">Chlamydia pneumoniae</name>
    <name type="common">Chlamydophila pneumoniae</name>
    <dbReference type="NCBI Taxonomy" id="83558"/>
    <lineage>
        <taxon>Bacteria</taxon>
        <taxon>Pseudomonadati</taxon>
        <taxon>Chlamydiota</taxon>
        <taxon>Chlamydiia</taxon>
        <taxon>Chlamydiales</taxon>
        <taxon>Chlamydiaceae</taxon>
        <taxon>Chlamydia/Chlamydophila group</taxon>
        <taxon>Chlamydia</taxon>
    </lineage>
</organism>
<feature type="chain" id="PRO_0000189864" description="Phosphate acyltransferase">
    <location>
        <begin position="1"/>
        <end position="320"/>
    </location>
</feature>